<feature type="peptide" id="PRO_0000421221" description="Short cationic peptide-5a" evidence="1">
    <location>
        <begin position="1"/>
        <end position="17"/>
    </location>
</feature>
<comment type="subcellular location">
    <subcellularLocation>
        <location evidence="1">Secreted</location>
    </subcellularLocation>
</comment>
<comment type="tissue specificity">
    <text evidence="5">Expressed by the venom gland.</text>
</comment>
<comment type="mass spectrometry"/>
<comment type="similarity">
    <text evidence="4">Belongs to the cationic peptide 04 (cupiennin) family. 05 subfamily.</text>
</comment>
<reference key="1">
    <citation type="journal article" date="2012" name="FEBS J.">
        <title>Multicomponent venom of the spider Cupiennius salei: a bioanalytical investigation applying different strategies.</title>
        <authorList>
            <person name="Trachsel C."/>
            <person name="Siegemund D."/>
            <person name="Kampfer U."/>
            <person name="Kopp L.S."/>
            <person name="Buhr C."/>
            <person name="Grossmann J."/>
            <person name="Luthi C."/>
            <person name="Cunningham M."/>
            <person name="Nentwig W."/>
            <person name="Kuhn-Nentwig L."/>
            <person name="Schurch S."/>
            <person name="Schaller J."/>
        </authorList>
    </citation>
    <scope>PROTEIN SEQUENCE</scope>
    <scope>MASS SPECTROMETRY</scope>
    <source>
        <tissue>Venom</tissue>
    </source>
</reference>
<reference key="2">
    <citation type="unpublished observations" date="2015-06">
        <authorList>
            <person name="Kuhn-Nentwig L."/>
            <person name="Gohel T."/>
        </authorList>
    </citation>
    <scope>NOMENCLATURE</scope>
</reference>
<evidence type="ECO:0000269" key="1">
    <source>
    </source>
</evidence>
<evidence type="ECO:0000303" key="2">
    <source>
    </source>
</evidence>
<evidence type="ECO:0000303" key="3">
    <source ref="2"/>
</evidence>
<evidence type="ECO:0000305" key="4"/>
<evidence type="ECO:0000305" key="5">
    <source>
    </source>
</evidence>
<protein>
    <recommendedName>
        <fullName evidence="3">Short cationic peptide-5a</fullName>
        <shortName evidence="3">SCP-5a</shortName>
    </recommendedName>
    <alternativeName>
        <fullName evidence="2">Short cationic peptide-7b</fullName>
        <shortName evidence="2">SCP-7b</shortName>
    </alternativeName>
    <alternativeName>
        <fullName evidence="3">Truncated variant of Cupiennin 5 family</fullName>
    </alternativeName>
</protein>
<accession>B3EWV0</accession>
<proteinExistence type="evidence at protein level"/>
<name>TXS5A_CUPSA</name>
<keyword id="KW-0903">Direct protein sequencing</keyword>
<keyword id="KW-0964">Secreted</keyword>
<keyword id="KW-0800">Toxin</keyword>
<organism>
    <name type="scientific">Cupiennius salei</name>
    <name type="common">American wandering spider</name>
    <dbReference type="NCBI Taxonomy" id="6928"/>
    <lineage>
        <taxon>Eukaryota</taxon>
        <taxon>Metazoa</taxon>
        <taxon>Ecdysozoa</taxon>
        <taxon>Arthropoda</taxon>
        <taxon>Chelicerata</taxon>
        <taxon>Arachnida</taxon>
        <taxon>Araneae</taxon>
        <taxon>Araneomorphae</taxon>
        <taxon>Entelegynae</taxon>
        <taxon>Lycosoidea</taxon>
        <taxon>Ctenidae</taxon>
        <taxon>Cupiennius</taxon>
    </lineage>
</organism>
<sequence>FLAKKLAKHLAKKQAES</sequence>
<dbReference type="GO" id="GO:0005576">
    <property type="term" value="C:extracellular region"/>
    <property type="evidence" value="ECO:0007669"/>
    <property type="project" value="UniProtKB-SubCell"/>
</dbReference>
<dbReference type="GO" id="GO:0090729">
    <property type="term" value="F:toxin activity"/>
    <property type="evidence" value="ECO:0007669"/>
    <property type="project" value="UniProtKB-KW"/>
</dbReference>